<evidence type="ECO:0000250" key="1"/>
<evidence type="ECO:0000305" key="2"/>
<dbReference type="EC" id="4.1.1.31"/>
<dbReference type="EMBL" id="X61489">
    <property type="protein sequence ID" value="CAA43709.1"/>
    <property type="molecule type" value="mRNA"/>
</dbReference>
<dbReference type="PIR" id="JH0667">
    <property type="entry name" value="JH0667"/>
</dbReference>
<dbReference type="RefSeq" id="NP_001105438.1">
    <property type="nucleotide sequence ID" value="NM_001111968.1"/>
</dbReference>
<dbReference type="SMR" id="P51059"/>
<dbReference type="FunCoup" id="P51059">
    <property type="interactions" value="422"/>
</dbReference>
<dbReference type="STRING" id="4577.P51059"/>
<dbReference type="PaxDb" id="4577-GRMZM2G473001_P01"/>
<dbReference type="GeneID" id="542393"/>
<dbReference type="KEGG" id="zma:542393"/>
<dbReference type="MaizeGDB" id="30066"/>
<dbReference type="eggNOG" id="ENOG502QPVS">
    <property type="taxonomic scope" value="Eukaryota"/>
</dbReference>
<dbReference type="InParanoid" id="P51059"/>
<dbReference type="OrthoDB" id="1365747at2759"/>
<dbReference type="SABIO-RK" id="P51059"/>
<dbReference type="UniPathway" id="UPA00321"/>
<dbReference type="Proteomes" id="UP000007305">
    <property type="component" value="Unplaced"/>
</dbReference>
<dbReference type="ExpressionAtlas" id="P51059">
    <property type="expression patterns" value="baseline and differential"/>
</dbReference>
<dbReference type="GO" id="GO:0005829">
    <property type="term" value="C:cytosol"/>
    <property type="evidence" value="ECO:0000318"/>
    <property type="project" value="GO_Central"/>
</dbReference>
<dbReference type="GO" id="GO:0008964">
    <property type="term" value="F:phosphoenolpyruvate carboxylase activity"/>
    <property type="evidence" value="ECO:0000318"/>
    <property type="project" value="GO_Central"/>
</dbReference>
<dbReference type="GO" id="GO:0015977">
    <property type="term" value="P:carbon fixation"/>
    <property type="evidence" value="ECO:0007669"/>
    <property type="project" value="UniProtKB-KW"/>
</dbReference>
<dbReference type="GO" id="GO:0048366">
    <property type="term" value="P:leaf development"/>
    <property type="evidence" value="ECO:0000318"/>
    <property type="project" value="GO_Central"/>
</dbReference>
<dbReference type="GO" id="GO:0015979">
    <property type="term" value="P:photosynthesis"/>
    <property type="evidence" value="ECO:0007669"/>
    <property type="project" value="UniProtKB-KW"/>
</dbReference>
<dbReference type="GO" id="GO:0006099">
    <property type="term" value="P:tricarboxylic acid cycle"/>
    <property type="evidence" value="ECO:0007669"/>
    <property type="project" value="InterPro"/>
</dbReference>
<dbReference type="FunFam" id="1.20.1440.90:FF:000001">
    <property type="entry name" value="Phosphoenolpyruvate carboxylase 1"/>
    <property type="match status" value="1"/>
</dbReference>
<dbReference type="Gene3D" id="1.20.1440.90">
    <property type="entry name" value="Phosphoenolpyruvate/pyruvate domain"/>
    <property type="match status" value="1"/>
</dbReference>
<dbReference type="HAMAP" id="MF_00595">
    <property type="entry name" value="PEPcase_type1"/>
    <property type="match status" value="1"/>
</dbReference>
<dbReference type="InterPro" id="IPR021135">
    <property type="entry name" value="PEP_COase"/>
</dbReference>
<dbReference type="InterPro" id="IPR022805">
    <property type="entry name" value="PEP_COase_bac/pln-type"/>
</dbReference>
<dbReference type="InterPro" id="IPR018129">
    <property type="entry name" value="PEP_COase_Lys_AS"/>
</dbReference>
<dbReference type="InterPro" id="IPR033129">
    <property type="entry name" value="PEPCASE_His_AS"/>
</dbReference>
<dbReference type="InterPro" id="IPR015813">
    <property type="entry name" value="Pyrv/PenolPyrv_kinase-like_dom"/>
</dbReference>
<dbReference type="NCBIfam" id="NF000584">
    <property type="entry name" value="PRK00009.1"/>
    <property type="match status" value="1"/>
</dbReference>
<dbReference type="PANTHER" id="PTHR30523">
    <property type="entry name" value="PHOSPHOENOLPYRUVATE CARBOXYLASE"/>
    <property type="match status" value="1"/>
</dbReference>
<dbReference type="PANTHER" id="PTHR30523:SF22">
    <property type="entry name" value="PHOSPHOENOLPYRUVATE CARBOXYLASE 2"/>
    <property type="match status" value="1"/>
</dbReference>
<dbReference type="Pfam" id="PF00311">
    <property type="entry name" value="PEPcase"/>
    <property type="match status" value="1"/>
</dbReference>
<dbReference type="PRINTS" id="PR00150">
    <property type="entry name" value="PEPCARBXLASE"/>
</dbReference>
<dbReference type="SUPFAM" id="SSF51621">
    <property type="entry name" value="Phosphoenolpyruvate/pyruvate domain"/>
    <property type="match status" value="1"/>
</dbReference>
<dbReference type="PROSITE" id="PS00781">
    <property type="entry name" value="PEPCASE_1"/>
    <property type="match status" value="1"/>
</dbReference>
<dbReference type="PROSITE" id="PS00393">
    <property type="entry name" value="PEPCASE_2"/>
    <property type="match status" value="1"/>
</dbReference>
<gene>
    <name type="primary">PEP4</name>
    <name type="synonym">PEP</name>
</gene>
<accession>P51059</accession>
<reference key="1">
    <citation type="journal article" date="1992" name="J. Biochem.">
        <title>Molecular evolution of phosphoenolpyruvate carboxylase for C4 photosynthesis in maize: comparison of its cDNA sequence with a newly isolated cDNA encoding an isozyme involved in the anaplerotic function.</title>
        <authorList>
            <person name="Kawamura T."/>
            <person name="Shigesada K."/>
            <person name="Toh H."/>
            <person name="Okumura S."/>
            <person name="Yanagisawa S."/>
            <person name="Izui K."/>
        </authorList>
    </citation>
    <scope>NUCLEOTIDE SEQUENCE [MRNA]</scope>
    <source>
        <strain>cv. H84</strain>
        <tissue>Root</tissue>
    </source>
</reference>
<name>CAPP2_MAIZE</name>
<protein>
    <recommendedName>
        <fullName>Phosphoenolpyruvate carboxylase 2</fullName>
        <shortName>PEPC 2</shortName>
        <shortName>PEPCase 2</shortName>
        <ecNumber>4.1.1.31</ecNumber>
    </recommendedName>
</protein>
<feature type="chain" id="PRO_0000166668" description="Phosphoenolpyruvate carboxylase 2">
    <location>
        <begin position="1"/>
        <end position="967"/>
    </location>
</feature>
<feature type="active site" evidence="1">
    <location>
        <position position="174"/>
    </location>
</feature>
<feature type="active site" evidence="1">
    <location>
        <position position="602"/>
    </location>
</feature>
<feature type="modified residue" description="Phosphoserine" evidence="1">
    <location>
        <position position="13"/>
    </location>
</feature>
<keyword id="KW-0021">Allosteric enzyme</keyword>
<keyword id="KW-0120">Carbon dioxide fixation</keyword>
<keyword id="KW-0963">Cytoplasm</keyword>
<keyword id="KW-0456">Lyase</keyword>
<keyword id="KW-0460">Magnesium</keyword>
<keyword id="KW-0597">Phosphoprotein</keyword>
<keyword id="KW-0602">Photosynthesis</keyword>
<keyword id="KW-1185">Reference proteome</keyword>
<comment type="function">
    <text>Through the carboxylation of phosphoenolpyruvate (PEP) it forms oxaloacetate, a four-carbon dicarboxylic acid source for the tricarboxylic acid cycle.</text>
</comment>
<comment type="catalytic activity">
    <reaction>
        <text>oxaloacetate + phosphate = phosphoenolpyruvate + hydrogencarbonate</text>
        <dbReference type="Rhea" id="RHEA:28370"/>
        <dbReference type="ChEBI" id="CHEBI:16452"/>
        <dbReference type="ChEBI" id="CHEBI:17544"/>
        <dbReference type="ChEBI" id="CHEBI:43474"/>
        <dbReference type="ChEBI" id="CHEBI:58702"/>
        <dbReference type="EC" id="4.1.1.31"/>
    </reaction>
</comment>
<comment type="cofactor">
    <cofactor evidence="1">
        <name>Mg(2+)</name>
        <dbReference type="ChEBI" id="CHEBI:18420"/>
    </cofactor>
</comment>
<comment type="activity regulation">
    <text evidence="1">By light-reversible phosphorylation.</text>
</comment>
<comment type="pathway">
    <text>Photosynthesis; C3 acid pathway.</text>
</comment>
<comment type="subunit">
    <text evidence="1">Homotetramer.</text>
</comment>
<comment type="subcellular location">
    <subcellularLocation>
        <location evidence="1">Cytoplasm</location>
    </subcellularLocation>
</comment>
<comment type="similarity">
    <text evidence="2">Belongs to the PEPCase type 1 family.</text>
</comment>
<proteinExistence type="evidence at transcript level"/>
<organism>
    <name type="scientific">Zea mays</name>
    <name type="common">Maize</name>
    <dbReference type="NCBI Taxonomy" id="4577"/>
    <lineage>
        <taxon>Eukaryota</taxon>
        <taxon>Viridiplantae</taxon>
        <taxon>Streptophyta</taxon>
        <taxon>Embryophyta</taxon>
        <taxon>Tracheophyta</taxon>
        <taxon>Spermatophyta</taxon>
        <taxon>Magnoliopsida</taxon>
        <taxon>Liliopsida</taxon>
        <taxon>Poales</taxon>
        <taxon>Poaceae</taxon>
        <taxon>PACMAD clade</taxon>
        <taxon>Panicoideae</taxon>
        <taxon>Andropogonodae</taxon>
        <taxon>Andropogoneae</taxon>
        <taxon>Tripsacinae</taxon>
        <taxon>Zea</taxon>
    </lineage>
</organism>
<sequence length="967" mass="109999">MAALGPKMERLSSIDAQLRMLVPGKVSEDDKLIEYDALLLDRFLDILQDLHGDDLKEMVQECYEVAAEYETKHDLQKLDELGKMITSLDPGDSIVIAKSLSHMLNLANLAEEVQIAYRRRIKLKKGDFADENSAITESDIEETLKRLVVDLKKSPAEVFDALKSQTVDLVLTAHPTQSVRRSLLQKHSRIRNCLVQLYSKDITPDDKQELDEALQREIQAAFRTDEIRRTQPTPQDEMRAGMSYFHETIWKGVPKFLRRVDTALKNIGINERVPYNAPLIQFSSWMGGDRDGNPRVTPEVTRDVCLLARMMASNLYCSQIEDLMFELSMWRCSDELRMRADVLHLSTKKDAKHYIEFWKKVPPNEPYRVILSDVRDKLYNTRERSRELLSSGHSDIPEEATLTNVEQLLEPLELCYRSLCACGDSVIADGTLLDFLRQVSTFGLSLVRLDIRQESDRHTDVLDAITTYLGIGSYREWTEERRQEWLLSELNGKRPLFGSDLPKTEEISDVLDTFHVIAELPSDNFGAYIISMATAPSDVLAVELLQRECHVKTPLRVVPLFEKLADLEAAPAALARLFSIDWYRQRINGKQEVMIGYSDSGKDAGRLSAAWQLYKAQEELIKVAKDFGVKLTMFHGRGGTVGRGGGPTHLAILSQPPDTIHGSLRVTVQGEVIEQSFGEEHLCFRTLQRFTAATLEHGMHPPNAPKPEWRALLDEMAVVATEEYRSIVFKEPRFVEYFRLATPETEYGRMNIGSRPSKRKPSGGIDSLRAIPWIFAWTQTRFHLPVWLGFGAAFKNVLQKDIRNLHMLQEMYNEWPFFRVTIDLVEMVFAKGNPGIAALYDKLLVSEELHPLGEKLRANYEETQKLLLQVAGHRDLLEGDLYLKQRLRLRDAYITTLNVCQAYTLKRIRDPDYHVALRPHLSKEIMDSTKAAADVVKLNPGSEYAPGLEDTLILTMKGIAAGLQNTG</sequence>